<dbReference type="EMBL" id="M24072">
    <property type="protein sequence ID" value="AAA33082.1"/>
    <property type="molecule type" value="Genomic_DNA"/>
</dbReference>
<dbReference type="PIR" id="A31392">
    <property type="entry name" value="A31392"/>
</dbReference>
<dbReference type="SMR" id="P14273"/>
<dbReference type="PaxDb" id="3055-EDP01611"/>
<dbReference type="ProMEX" id="P14273"/>
<dbReference type="eggNOG" id="ENOG502QPU1">
    <property type="taxonomic scope" value="Eukaryota"/>
</dbReference>
<dbReference type="GO" id="GO:0009535">
    <property type="term" value="C:chloroplast thylakoid membrane"/>
    <property type="evidence" value="ECO:0007669"/>
    <property type="project" value="UniProtKB-SubCell"/>
</dbReference>
<dbReference type="GO" id="GO:0009522">
    <property type="term" value="C:photosystem I"/>
    <property type="evidence" value="ECO:0007669"/>
    <property type="project" value="UniProtKB-KW"/>
</dbReference>
<dbReference type="GO" id="GO:0009523">
    <property type="term" value="C:photosystem II"/>
    <property type="evidence" value="ECO:0007669"/>
    <property type="project" value="UniProtKB-KW"/>
</dbReference>
<dbReference type="GO" id="GO:0016168">
    <property type="term" value="F:chlorophyll binding"/>
    <property type="evidence" value="ECO:0007669"/>
    <property type="project" value="UniProtKB-KW"/>
</dbReference>
<dbReference type="GO" id="GO:0046872">
    <property type="term" value="F:metal ion binding"/>
    <property type="evidence" value="ECO:0007669"/>
    <property type="project" value="UniProtKB-KW"/>
</dbReference>
<dbReference type="GO" id="GO:0009765">
    <property type="term" value="P:photosynthesis, light harvesting"/>
    <property type="evidence" value="ECO:0007669"/>
    <property type="project" value="InterPro"/>
</dbReference>
<dbReference type="FunFam" id="1.10.3460.10:FF:000001">
    <property type="entry name" value="Chlorophyll a-b binding protein, chloroplastic"/>
    <property type="match status" value="1"/>
</dbReference>
<dbReference type="Gene3D" id="1.10.3460.10">
    <property type="entry name" value="Chlorophyll a/b binding protein domain"/>
    <property type="match status" value="1"/>
</dbReference>
<dbReference type="InterPro" id="IPR001344">
    <property type="entry name" value="Chloro_AB-bd_pln"/>
</dbReference>
<dbReference type="InterPro" id="IPR022796">
    <property type="entry name" value="Chloroa_b-bind"/>
</dbReference>
<dbReference type="PANTHER" id="PTHR21649">
    <property type="entry name" value="CHLOROPHYLL A/B BINDING PROTEIN"/>
    <property type="match status" value="1"/>
</dbReference>
<dbReference type="Pfam" id="PF00504">
    <property type="entry name" value="Chloroa_b-bind"/>
    <property type="match status" value="1"/>
</dbReference>
<dbReference type="SUPFAM" id="SSF103511">
    <property type="entry name" value="Chlorophyll a-b binding protein"/>
    <property type="match status" value="1"/>
</dbReference>
<evidence type="ECO:0000250" key="1"/>
<evidence type="ECO:0000250" key="2">
    <source>
        <dbReference type="UniProtKB" id="P07371"/>
    </source>
</evidence>
<evidence type="ECO:0000250" key="3">
    <source>
        <dbReference type="UniProtKB" id="P12333"/>
    </source>
</evidence>
<evidence type="ECO:0000255" key="4"/>
<evidence type="ECO:0000305" key="5"/>
<keyword id="KW-0148">Chlorophyll</keyword>
<keyword id="KW-0150">Chloroplast</keyword>
<keyword id="KW-0157">Chromophore</keyword>
<keyword id="KW-0460">Magnesium</keyword>
<keyword id="KW-0472">Membrane</keyword>
<keyword id="KW-0479">Metal-binding</keyword>
<keyword id="KW-0597">Phosphoprotein</keyword>
<keyword id="KW-0602">Photosynthesis</keyword>
<keyword id="KW-0603">Photosystem I</keyword>
<keyword id="KW-0604">Photosystem II</keyword>
<keyword id="KW-0934">Plastid</keyword>
<keyword id="KW-0793">Thylakoid</keyword>
<keyword id="KW-0809">Transit peptide</keyword>
<keyword id="KW-0812">Transmembrane</keyword>
<keyword id="KW-1133">Transmembrane helix</keyword>
<comment type="function">
    <text>The light-harvesting complex (LHC) functions as a light receptor, it captures and delivers excitation energy to photosystems with which it is closely associated.</text>
</comment>
<comment type="cofactor">
    <text evidence="1">Binds at least 14 chlorophylls (8 Chl-a and 6 Chl-b) and carotenoids such as lutein and neoxanthin.</text>
</comment>
<comment type="subunit">
    <text>The LHC complex consists of chlorophyll a-b binding proteins.</text>
</comment>
<comment type="subcellular location">
    <subcellularLocation>
        <location>Plastid</location>
        <location>Chloroplast thylakoid membrane</location>
        <topology>Multi-pass membrane protein</topology>
    </subcellularLocation>
</comment>
<comment type="domain">
    <text>The N-terminus of the protein extends into the stroma where it is involved with adhesion of granal membranes and post-translational modifications; both are believed to mediate the distribution of excitation energy between photosystems I and II.</text>
</comment>
<comment type="PTM">
    <text evidence="1">Photoregulated by reversible phosphorylation of its threonine residues.</text>
</comment>
<comment type="similarity">
    <text evidence="5">Belongs to the light-harvesting chlorophyll a/b-binding (LHC) protein family.</text>
</comment>
<gene>
    <name type="primary">cabII-1</name>
</gene>
<name>CB2_CHLRE</name>
<feature type="transit peptide" description="Chloroplast" evidence="5">
    <location>
        <begin position="1"/>
        <end status="unknown"/>
    </location>
</feature>
<feature type="chain" id="PRO_0000003655" description="Chlorophyll a-b binding protein of LHCII type I, chloroplastic">
    <location>
        <begin status="unknown"/>
        <end position="253"/>
    </location>
</feature>
<feature type="transmembrane region" description="Helical" evidence="4">
    <location>
        <begin position="92"/>
        <end position="111"/>
    </location>
</feature>
<feature type="transmembrane region" description="Helical" evidence="4">
    <location>
        <begin position="139"/>
        <end position="159"/>
    </location>
</feature>
<feature type="transmembrane region" description="Helical" evidence="4">
    <location>
        <begin position="207"/>
        <end position="227"/>
    </location>
</feature>
<feature type="binding site" description="axial binding residue" evidence="1">
    <location>
        <position position="44"/>
    </location>
    <ligand>
        <name>chlorophyll b</name>
        <dbReference type="ChEBI" id="CHEBI:61721"/>
        <label>1</label>
    </ligand>
    <ligandPart>
        <name>Mg</name>
        <dbReference type="ChEBI" id="CHEBI:25107"/>
    </ligandPart>
</feature>
<feature type="binding site" evidence="1">
    <location>
        <position position="67"/>
    </location>
    <ligand>
        <name>chlorophyll a</name>
        <dbReference type="ChEBI" id="CHEBI:58416"/>
        <label>1</label>
    </ligand>
</feature>
<feature type="binding site" evidence="1">
    <location>
        <position position="73"/>
    </location>
    <ligand>
        <name>chlorophyll a</name>
        <dbReference type="ChEBI" id="CHEBI:58416"/>
        <label>1</label>
    </ligand>
</feature>
<feature type="binding site" description="axial binding residue" evidence="3">
    <location>
        <position position="86"/>
    </location>
    <ligand>
        <name>chlorophyll a</name>
        <dbReference type="ChEBI" id="CHEBI:58416"/>
        <label>1</label>
    </ligand>
    <ligandPart>
        <name>Mg</name>
        <dbReference type="ChEBI" id="CHEBI:25107"/>
    </ligandPart>
</feature>
<feature type="binding site" description="axial binding residue" evidence="3">
    <location>
        <position position="89"/>
    </location>
    <ligand>
        <name>chlorophyll a</name>
        <dbReference type="ChEBI" id="CHEBI:58416"/>
        <label>2</label>
    </ligand>
    <ligandPart>
        <name>Mg</name>
        <dbReference type="ChEBI" id="CHEBI:25107"/>
    </ligandPart>
</feature>
<feature type="binding site" evidence="1">
    <location>
        <position position="91"/>
    </location>
    <ligand>
        <name>chlorophyll b</name>
        <dbReference type="ChEBI" id="CHEBI:61721"/>
        <label>2</label>
    </ligand>
</feature>
<feature type="binding site" evidence="1">
    <location>
        <position position="124"/>
    </location>
    <ligand>
        <name>chlorophyll a</name>
        <dbReference type="ChEBI" id="CHEBI:58416"/>
        <label>3</label>
    </ligand>
</feature>
<feature type="binding site" evidence="1">
    <location>
        <position position="134"/>
    </location>
    <ligand>
        <name>chlorophyll a</name>
        <dbReference type="ChEBI" id="CHEBI:58416"/>
        <label>3</label>
    </ligand>
</feature>
<feature type="binding site" description="axial binding residue" evidence="3">
    <location>
        <position position="140"/>
    </location>
    <ligand>
        <name>chlorophyll b</name>
        <dbReference type="ChEBI" id="CHEBI:61721"/>
        <label>2</label>
    </ligand>
    <ligandPart>
        <name>Mg</name>
        <dbReference type="ChEBI" id="CHEBI:25107"/>
    </ligandPart>
</feature>
<feature type="binding site" evidence="1">
    <location>
        <position position="152"/>
    </location>
    <ligand>
        <name>chlorophyll b</name>
        <dbReference type="ChEBI" id="CHEBI:61721"/>
        <label>4</label>
    </ligand>
</feature>
<feature type="binding site" evidence="2">
    <location>
        <position position="152"/>
    </location>
    <ligand>
        <name>chlorophyll b</name>
        <dbReference type="ChEBI" id="CHEBI:61721"/>
        <label>5</label>
    </ligand>
</feature>
<feature type="binding site" description="axial binding residue" evidence="3">
    <location>
        <position position="160"/>
    </location>
    <ligand>
        <name>chlorophyll b</name>
        <dbReference type="ChEBI" id="CHEBI:61721"/>
        <label>3</label>
    </ligand>
    <ligandPart>
        <name>Mg</name>
        <dbReference type="ChEBI" id="CHEBI:25107"/>
    </ligandPart>
</feature>
<feature type="binding site" evidence="1">
    <location>
        <position position="163"/>
    </location>
    <ligand>
        <name>chlorophyll b</name>
        <dbReference type="ChEBI" id="CHEBI:61721"/>
        <label>4</label>
    </ligand>
</feature>
<feature type="binding site" evidence="1">
    <location>
        <position position="200"/>
    </location>
    <ligand>
        <name>chlorophyll a</name>
        <dbReference type="ChEBI" id="CHEBI:58416"/>
        <label>5</label>
    </ligand>
</feature>
<feature type="binding site" description="axial binding residue" evidence="3">
    <location>
        <position position="201"/>
    </location>
    <ligand>
        <name>chlorophyll a</name>
        <dbReference type="ChEBI" id="CHEBI:58416"/>
        <label>3</label>
    </ligand>
    <ligandPart>
        <name>Mg</name>
        <dbReference type="ChEBI" id="CHEBI:25107"/>
    </ligandPart>
</feature>
<feature type="binding site" description="axial binding residue" evidence="3">
    <location>
        <position position="204"/>
    </location>
    <ligand>
        <name>chlorophyll a</name>
        <dbReference type="ChEBI" id="CHEBI:58416"/>
        <label>4</label>
    </ligand>
    <ligandPart>
        <name>Mg</name>
        <dbReference type="ChEBI" id="CHEBI:25107"/>
    </ligandPart>
</feature>
<feature type="binding site" evidence="1">
    <location>
        <position position="206"/>
    </location>
    <ligand>
        <name>chlorophyll a</name>
        <dbReference type="ChEBI" id="CHEBI:58416"/>
        <label>1</label>
    </ligand>
</feature>
<feature type="binding site" description="axial binding residue" evidence="3">
    <location>
        <position position="218"/>
    </location>
    <ligand>
        <name>chlorophyll a</name>
        <dbReference type="ChEBI" id="CHEBI:58416"/>
        <label>5</label>
    </ligand>
    <ligandPart>
        <name>Mg</name>
        <dbReference type="ChEBI" id="CHEBI:25107"/>
    </ligandPart>
</feature>
<feature type="binding site" description="axial binding residue" evidence="3">
    <location>
        <position position="233"/>
    </location>
    <ligand>
        <name>chlorophyll a</name>
        <dbReference type="ChEBI" id="CHEBI:58416"/>
        <label>6</label>
    </ligand>
    <ligandPart>
        <name>Mg</name>
        <dbReference type="ChEBI" id="CHEBI:25107"/>
    </ligandPart>
</feature>
<feature type="binding site" evidence="1">
    <location>
        <position position="242"/>
    </location>
    <ligand>
        <name>chlorophyll a</name>
        <dbReference type="ChEBI" id="CHEBI:58416"/>
        <label>6</label>
    </ligand>
</feature>
<feature type="binding site" evidence="1">
    <location>
        <position position="249"/>
    </location>
    <ligand>
        <name>chlorophyll b</name>
        <dbReference type="ChEBI" id="CHEBI:61721"/>
        <label>5</label>
    </ligand>
</feature>
<feature type="modified residue" description="Phosphothreonine" evidence="1">
    <location>
        <position position="22"/>
    </location>
</feature>
<proteinExistence type="inferred from homology"/>
<reference key="1">
    <citation type="journal article" date="1988" name="Gene">
        <title>Structure of the Chlamydomonas reinhardtii cabII-1 gene encoding a chlorophyll-a/b-binding protein.</title>
        <authorList>
            <person name="Imbault P."/>
            <person name="Wittemer C."/>
            <person name="Johanningmeier U."/>
            <person name="Jacobs J.D."/>
            <person name="Howell S.H."/>
        </authorList>
    </citation>
    <scope>NUCLEOTIDE SEQUENCE [GENOMIC DNA]</scope>
</reference>
<protein>
    <recommendedName>
        <fullName>Chlorophyll a-b binding protein of LHCII type I, chloroplastic</fullName>
        <shortName>CAB</shortName>
        <shortName>LHCP</shortName>
    </recommendedName>
</protein>
<organism>
    <name type="scientific">Chlamydomonas reinhardtii</name>
    <name type="common">Chlamydomonas smithii</name>
    <dbReference type="NCBI Taxonomy" id="3055"/>
    <lineage>
        <taxon>Eukaryota</taxon>
        <taxon>Viridiplantae</taxon>
        <taxon>Chlorophyta</taxon>
        <taxon>core chlorophytes</taxon>
        <taxon>Chlorophyceae</taxon>
        <taxon>CS clade</taxon>
        <taxon>Chlamydomonadales</taxon>
        <taxon>Chlamydomonadaceae</taxon>
        <taxon>Chlamydomonas</taxon>
    </lineage>
</organism>
<accession>P14273</accession>
<sequence length="253" mass="26906">MAFALASRKALQVTCKATGKKTAAKAAAPKSSGVEFYGPNRAKWLGPYSENATPAYLTGEFPGDYGWDTAGLSADPETFKRYRELELIHARWAMLGALGCQTPELLAKSGTKFGEAVWFKAGAQIFSEGGLDYLGNPSLVHAQNIVATSAVQVILMGLIEGYRVNGGPAGEGLDPLYPGESFDPLGLADDPDTFAELKVKEIKNGRLASFSMFGFFVQAIVTGKGPVQNLDDHLANPTVNNAFAFATKFTPSA</sequence>